<keyword id="KW-0175">Coiled coil</keyword>
<keyword id="KW-1185">Reference proteome</keyword>
<feature type="chain" id="PRO_0000128007" description="Uncharacterized protein AF_1465">
    <location>
        <begin position="1"/>
        <end position="149"/>
    </location>
</feature>
<feature type="region of interest" description="Disordered" evidence="2">
    <location>
        <begin position="24"/>
        <end position="74"/>
    </location>
</feature>
<feature type="region of interest" description="Disordered" evidence="2">
    <location>
        <begin position="129"/>
        <end position="149"/>
    </location>
</feature>
<feature type="coiled-coil region" evidence="1">
    <location>
        <begin position="102"/>
        <end position="131"/>
    </location>
</feature>
<feature type="compositionally biased region" description="Basic and acidic residues" evidence="2">
    <location>
        <begin position="28"/>
        <end position="42"/>
    </location>
</feature>
<reference key="1">
    <citation type="journal article" date="1997" name="Nature">
        <title>The complete genome sequence of the hyperthermophilic, sulphate-reducing archaeon Archaeoglobus fulgidus.</title>
        <authorList>
            <person name="Klenk H.-P."/>
            <person name="Clayton R.A."/>
            <person name="Tomb J.-F."/>
            <person name="White O."/>
            <person name="Nelson K.E."/>
            <person name="Ketchum K.A."/>
            <person name="Dodson R.J."/>
            <person name="Gwinn M.L."/>
            <person name="Hickey E.K."/>
            <person name="Peterson J.D."/>
            <person name="Richardson D.L."/>
            <person name="Kerlavage A.R."/>
            <person name="Graham D.E."/>
            <person name="Kyrpides N.C."/>
            <person name="Fleischmann R.D."/>
            <person name="Quackenbush J."/>
            <person name="Lee N.H."/>
            <person name="Sutton G.G."/>
            <person name="Gill S.R."/>
            <person name="Kirkness E.F."/>
            <person name="Dougherty B.A."/>
            <person name="McKenney K."/>
            <person name="Adams M.D."/>
            <person name="Loftus B.J."/>
            <person name="Peterson S.N."/>
            <person name="Reich C.I."/>
            <person name="McNeil L.K."/>
            <person name="Badger J.H."/>
            <person name="Glodek A."/>
            <person name="Zhou L."/>
            <person name="Overbeek R."/>
            <person name="Gocayne J.D."/>
            <person name="Weidman J.F."/>
            <person name="McDonald L.A."/>
            <person name="Utterback T.R."/>
            <person name="Cotton M.D."/>
            <person name="Spriggs T."/>
            <person name="Artiach P."/>
            <person name="Kaine B.P."/>
            <person name="Sykes S.M."/>
            <person name="Sadow P.W."/>
            <person name="D'Andrea K.P."/>
            <person name="Bowman C."/>
            <person name="Fujii C."/>
            <person name="Garland S.A."/>
            <person name="Mason T.M."/>
            <person name="Olsen G.J."/>
            <person name="Fraser C.M."/>
            <person name="Smith H.O."/>
            <person name="Woese C.R."/>
            <person name="Venter J.C."/>
        </authorList>
    </citation>
    <scope>NUCLEOTIDE SEQUENCE [LARGE SCALE GENOMIC DNA]</scope>
    <source>
        <strain>ATCC 49558 / DSM 4304 / JCM 9628 / NBRC 100126 / VC-16</strain>
    </source>
</reference>
<gene>
    <name type="ordered locus">AF_1465</name>
</gene>
<evidence type="ECO:0000255" key="1"/>
<evidence type="ECO:0000256" key="2">
    <source>
        <dbReference type="SAM" id="MobiDB-lite"/>
    </source>
</evidence>
<dbReference type="EMBL" id="AE000782">
    <property type="protein sequence ID" value="AAB89788.1"/>
    <property type="molecule type" value="Genomic_DNA"/>
</dbReference>
<dbReference type="PIR" id="H69432">
    <property type="entry name" value="H69432"/>
</dbReference>
<dbReference type="RefSeq" id="WP_010878962.1">
    <property type="nucleotide sequence ID" value="NC_000917.1"/>
</dbReference>
<dbReference type="SMR" id="O28807"/>
<dbReference type="STRING" id="224325.AF_1465"/>
<dbReference type="PaxDb" id="224325-AF_1465"/>
<dbReference type="DNASU" id="1484691"/>
<dbReference type="EnsemblBacteria" id="AAB89788">
    <property type="protein sequence ID" value="AAB89788"/>
    <property type="gene ID" value="AF_1465"/>
</dbReference>
<dbReference type="GeneID" id="1484691"/>
<dbReference type="KEGG" id="afu:AF_1465"/>
<dbReference type="eggNOG" id="arCOG03972">
    <property type="taxonomic scope" value="Archaea"/>
</dbReference>
<dbReference type="HOGENOM" id="CLU_1745451_0_0_2"/>
<dbReference type="Proteomes" id="UP000002199">
    <property type="component" value="Chromosome"/>
</dbReference>
<sequence length="149" mass="16168">MPARKLTFILIIMLSGAAILSGCTSQGEDVKPEPKPEVDEKVTVPNPETTSNISAPMPPLKNSTSPVPPVNDLEGGKEALLDMINRTIDMLEREGARSDIISELESLKEKVSSATSMEELREIMEEFRAIQDDAGIPNPEMPKSAPRAP</sequence>
<protein>
    <recommendedName>
        <fullName>Uncharacterized protein AF_1465</fullName>
    </recommendedName>
</protein>
<proteinExistence type="predicted"/>
<name>Y1465_ARCFU</name>
<organism>
    <name type="scientific">Archaeoglobus fulgidus (strain ATCC 49558 / DSM 4304 / JCM 9628 / NBRC 100126 / VC-16)</name>
    <dbReference type="NCBI Taxonomy" id="224325"/>
    <lineage>
        <taxon>Archaea</taxon>
        <taxon>Methanobacteriati</taxon>
        <taxon>Methanobacteriota</taxon>
        <taxon>Archaeoglobi</taxon>
        <taxon>Archaeoglobales</taxon>
        <taxon>Archaeoglobaceae</taxon>
        <taxon>Archaeoglobus</taxon>
    </lineage>
</organism>
<accession>O28807</accession>